<organism>
    <name type="scientific">Escherichia coli O8 (strain IAI1)</name>
    <dbReference type="NCBI Taxonomy" id="585034"/>
    <lineage>
        <taxon>Bacteria</taxon>
        <taxon>Pseudomonadati</taxon>
        <taxon>Pseudomonadota</taxon>
        <taxon>Gammaproteobacteria</taxon>
        <taxon>Enterobacterales</taxon>
        <taxon>Enterobacteriaceae</taxon>
        <taxon>Escherichia</taxon>
    </lineage>
</organism>
<keyword id="KW-0687">Ribonucleoprotein</keyword>
<keyword id="KW-0689">Ribosomal protein</keyword>
<accession>B7M4C0</accession>
<comment type="similarity">
    <text evidence="1">Belongs to the bacterial ribosomal protein bL33 family.</text>
</comment>
<protein>
    <recommendedName>
        <fullName evidence="1">Large ribosomal subunit protein bL33</fullName>
    </recommendedName>
    <alternativeName>
        <fullName evidence="2">50S ribosomal protein L33</fullName>
    </alternativeName>
</protein>
<evidence type="ECO:0000255" key="1">
    <source>
        <dbReference type="HAMAP-Rule" id="MF_00294"/>
    </source>
</evidence>
<evidence type="ECO:0000305" key="2"/>
<gene>
    <name evidence="1" type="primary">rpmG</name>
    <name type="ordered locus">ECIAI1_3806</name>
</gene>
<sequence>MAKGIREKIKLVSSAGTGHFYTTTKNKRTKPEKLELKKFDPVVRQHVIYKEAKIK</sequence>
<dbReference type="EMBL" id="CU928160">
    <property type="protein sequence ID" value="CAR00603.1"/>
    <property type="molecule type" value="Genomic_DNA"/>
</dbReference>
<dbReference type="RefSeq" id="WP_001051798.1">
    <property type="nucleotide sequence ID" value="NC_011741.1"/>
</dbReference>
<dbReference type="SMR" id="B7M4C0"/>
<dbReference type="GeneID" id="97607673"/>
<dbReference type="KEGG" id="ecr:ECIAI1_3806"/>
<dbReference type="HOGENOM" id="CLU_190949_1_1_6"/>
<dbReference type="GO" id="GO:0022625">
    <property type="term" value="C:cytosolic large ribosomal subunit"/>
    <property type="evidence" value="ECO:0007669"/>
    <property type="project" value="TreeGrafter"/>
</dbReference>
<dbReference type="GO" id="GO:0003735">
    <property type="term" value="F:structural constituent of ribosome"/>
    <property type="evidence" value="ECO:0007669"/>
    <property type="project" value="InterPro"/>
</dbReference>
<dbReference type="GO" id="GO:0006412">
    <property type="term" value="P:translation"/>
    <property type="evidence" value="ECO:0007669"/>
    <property type="project" value="UniProtKB-UniRule"/>
</dbReference>
<dbReference type="FunFam" id="2.20.28.120:FF:000001">
    <property type="entry name" value="50S ribosomal protein L33"/>
    <property type="match status" value="1"/>
</dbReference>
<dbReference type="Gene3D" id="2.20.28.120">
    <property type="entry name" value="Ribosomal protein L33"/>
    <property type="match status" value="1"/>
</dbReference>
<dbReference type="HAMAP" id="MF_00294">
    <property type="entry name" value="Ribosomal_bL33"/>
    <property type="match status" value="1"/>
</dbReference>
<dbReference type="InterPro" id="IPR001705">
    <property type="entry name" value="Ribosomal_bL33"/>
</dbReference>
<dbReference type="InterPro" id="IPR018264">
    <property type="entry name" value="Ribosomal_bL33_CS"/>
</dbReference>
<dbReference type="InterPro" id="IPR038584">
    <property type="entry name" value="Ribosomal_bL33_sf"/>
</dbReference>
<dbReference type="InterPro" id="IPR011332">
    <property type="entry name" value="Ribosomal_zn-bd"/>
</dbReference>
<dbReference type="NCBIfam" id="NF001860">
    <property type="entry name" value="PRK00595.1"/>
    <property type="match status" value="1"/>
</dbReference>
<dbReference type="NCBIfam" id="TIGR01023">
    <property type="entry name" value="rpmG_bact"/>
    <property type="match status" value="1"/>
</dbReference>
<dbReference type="PANTHER" id="PTHR15238">
    <property type="entry name" value="54S RIBOSOMAL PROTEIN L39, MITOCHONDRIAL"/>
    <property type="match status" value="1"/>
</dbReference>
<dbReference type="PANTHER" id="PTHR15238:SF1">
    <property type="entry name" value="LARGE RIBOSOMAL SUBUNIT PROTEIN BL33M"/>
    <property type="match status" value="1"/>
</dbReference>
<dbReference type="Pfam" id="PF00471">
    <property type="entry name" value="Ribosomal_L33"/>
    <property type="match status" value="1"/>
</dbReference>
<dbReference type="SUPFAM" id="SSF57829">
    <property type="entry name" value="Zn-binding ribosomal proteins"/>
    <property type="match status" value="1"/>
</dbReference>
<dbReference type="PROSITE" id="PS00582">
    <property type="entry name" value="RIBOSOMAL_L33"/>
    <property type="match status" value="1"/>
</dbReference>
<feature type="chain" id="PRO_1000119439" description="Large ribosomal subunit protein bL33">
    <location>
        <begin position="1"/>
        <end position="55"/>
    </location>
</feature>
<reference key="1">
    <citation type="journal article" date="2009" name="PLoS Genet.">
        <title>Organised genome dynamics in the Escherichia coli species results in highly diverse adaptive paths.</title>
        <authorList>
            <person name="Touchon M."/>
            <person name="Hoede C."/>
            <person name="Tenaillon O."/>
            <person name="Barbe V."/>
            <person name="Baeriswyl S."/>
            <person name="Bidet P."/>
            <person name="Bingen E."/>
            <person name="Bonacorsi S."/>
            <person name="Bouchier C."/>
            <person name="Bouvet O."/>
            <person name="Calteau A."/>
            <person name="Chiapello H."/>
            <person name="Clermont O."/>
            <person name="Cruveiller S."/>
            <person name="Danchin A."/>
            <person name="Diard M."/>
            <person name="Dossat C."/>
            <person name="Karoui M.E."/>
            <person name="Frapy E."/>
            <person name="Garry L."/>
            <person name="Ghigo J.M."/>
            <person name="Gilles A.M."/>
            <person name="Johnson J."/>
            <person name="Le Bouguenec C."/>
            <person name="Lescat M."/>
            <person name="Mangenot S."/>
            <person name="Martinez-Jehanne V."/>
            <person name="Matic I."/>
            <person name="Nassif X."/>
            <person name="Oztas S."/>
            <person name="Petit M.A."/>
            <person name="Pichon C."/>
            <person name="Rouy Z."/>
            <person name="Ruf C.S."/>
            <person name="Schneider D."/>
            <person name="Tourret J."/>
            <person name="Vacherie B."/>
            <person name="Vallenet D."/>
            <person name="Medigue C."/>
            <person name="Rocha E.P.C."/>
            <person name="Denamur E."/>
        </authorList>
    </citation>
    <scope>NUCLEOTIDE SEQUENCE [LARGE SCALE GENOMIC DNA]</scope>
    <source>
        <strain>IAI1</strain>
    </source>
</reference>
<proteinExistence type="inferred from homology"/>
<name>RL33_ECO8A</name>